<evidence type="ECO:0000255" key="1">
    <source>
        <dbReference type="HAMAP-Rule" id="MF_01464"/>
    </source>
</evidence>
<sequence>MMKLFTKDKDGHFIREINGIKLPFPLTEFMKVRKLGYILSALLMVISLFFIITKGFNWGLDFTGGVVFDTHFSQSANLEQIRSKLHENGIESPIVQTTGSVQDVMIRLPASNNDSTIGEHVKSMLQNVDKDIQIRSIEFVGPNVGEELAQGAVYATLATLAMVLIYVGSRFEWRLGFGSIASLAHDVIITLGVFSALQIEIDLTFVAAILSVVGYSINDSIVVFDRVRENFRKIRRLDTIDIIDISLTQTLSRTIITSVTTLVVVMALFFFGGPSIHNFSLALLVGIGFGTYSSIFVAIAIAYDVGLRREHMIPPKVDKEIDELP</sequence>
<dbReference type="EMBL" id="L42023">
    <property type="protein sequence ID" value="AAC21907.1"/>
    <property type="molecule type" value="Genomic_DNA"/>
</dbReference>
<dbReference type="PIR" id="H64056">
    <property type="entry name" value="H64056"/>
</dbReference>
<dbReference type="RefSeq" id="NP_438409.1">
    <property type="nucleotide sequence ID" value="NC_000907.1"/>
</dbReference>
<dbReference type="SMR" id="P44590"/>
<dbReference type="STRING" id="71421.HI_0239"/>
<dbReference type="EnsemblBacteria" id="AAC21907">
    <property type="protein sequence ID" value="AAC21907"/>
    <property type="gene ID" value="HI_0239"/>
</dbReference>
<dbReference type="KEGG" id="hin:HI_0239"/>
<dbReference type="PATRIC" id="fig|71421.8.peg.254"/>
<dbReference type="eggNOG" id="COG0341">
    <property type="taxonomic scope" value="Bacteria"/>
</dbReference>
<dbReference type="HOGENOM" id="CLU_050012_1_0_6"/>
<dbReference type="OrthoDB" id="9774769at2"/>
<dbReference type="PhylomeDB" id="P44590"/>
<dbReference type="BioCyc" id="HINF71421:G1GJ1-254-MONOMER"/>
<dbReference type="Proteomes" id="UP000000579">
    <property type="component" value="Chromosome"/>
</dbReference>
<dbReference type="GO" id="GO:0005886">
    <property type="term" value="C:plasma membrane"/>
    <property type="evidence" value="ECO:0000318"/>
    <property type="project" value="GO_Central"/>
</dbReference>
<dbReference type="GO" id="GO:0015450">
    <property type="term" value="F:protein-transporting ATPase activity"/>
    <property type="evidence" value="ECO:0007669"/>
    <property type="project" value="InterPro"/>
</dbReference>
<dbReference type="GO" id="GO:0065002">
    <property type="term" value="P:intracellular protein transmembrane transport"/>
    <property type="evidence" value="ECO:0007669"/>
    <property type="project" value="UniProtKB-UniRule"/>
</dbReference>
<dbReference type="GO" id="GO:0006605">
    <property type="term" value="P:protein targeting"/>
    <property type="evidence" value="ECO:0007669"/>
    <property type="project" value="UniProtKB-UniRule"/>
</dbReference>
<dbReference type="GO" id="GO:0015031">
    <property type="term" value="P:protein transport"/>
    <property type="evidence" value="ECO:0000318"/>
    <property type="project" value="GO_Central"/>
</dbReference>
<dbReference type="GO" id="GO:0043952">
    <property type="term" value="P:protein transport by the Sec complex"/>
    <property type="evidence" value="ECO:0007669"/>
    <property type="project" value="UniProtKB-UniRule"/>
</dbReference>
<dbReference type="FunFam" id="1.20.1640.10:FF:000006">
    <property type="entry name" value="Protein-export membrane protein SecF"/>
    <property type="match status" value="1"/>
</dbReference>
<dbReference type="Gene3D" id="1.20.1640.10">
    <property type="entry name" value="Multidrug efflux transporter AcrB transmembrane domain"/>
    <property type="match status" value="1"/>
</dbReference>
<dbReference type="HAMAP" id="MF_01464_B">
    <property type="entry name" value="SecF_B"/>
    <property type="match status" value="1"/>
</dbReference>
<dbReference type="InterPro" id="IPR022813">
    <property type="entry name" value="SecD/SecF_arch_bac"/>
</dbReference>
<dbReference type="InterPro" id="IPR022645">
    <property type="entry name" value="SecD/SecF_bac"/>
</dbReference>
<dbReference type="InterPro" id="IPR022646">
    <property type="entry name" value="SecD/SecF_CS"/>
</dbReference>
<dbReference type="InterPro" id="IPR048634">
    <property type="entry name" value="SecD_SecF_C"/>
</dbReference>
<dbReference type="InterPro" id="IPR055344">
    <property type="entry name" value="SecD_SecF_C_bact"/>
</dbReference>
<dbReference type="InterPro" id="IPR005665">
    <property type="entry name" value="SecF_bac"/>
</dbReference>
<dbReference type="NCBIfam" id="TIGR00916">
    <property type="entry name" value="2A0604s01"/>
    <property type="match status" value="1"/>
</dbReference>
<dbReference type="NCBIfam" id="TIGR00966">
    <property type="entry name" value="transloc_SecF"/>
    <property type="match status" value="1"/>
</dbReference>
<dbReference type="PANTHER" id="PTHR30081:SF8">
    <property type="entry name" value="PROTEIN TRANSLOCASE SUBUNIT SECF"/>
    <property type="match status" value="1"/>
</dbReference>
<dbReference type="PANTHER" id="PTHR30081">
    <property type="entry name" value="PROTEIN-EXPORT MEMBRANE PROTEIN SEC"/>
    <property type="match status" value="1"/>
</dbReference>
<dbReference type="Pfam" id="PF07549">
    <property type="entry name" value="Sec_GG"/>
    <property type="match status" value="1"/>
</dbReference>
<dbReference type="Pfam" id="PF02355">
    <property type="entry name" value="SecD_SecF_C"/>
    <property type="match status" value="1"/>
</dbReference>
<dbReference type="PRINTS" id="PR01755">
    <property type="entry name" value="SECFTRNLCASE"/>
</dbReference>
<dbReference type="SUPFAM" id="SSF82866">
    <property type="entry name" value="Multidrug efflux transporter AcrB transmembrane domain"/>
    <property type="match status" value="1"/>
</dbReference>
<protein>
    <recommendedName>
        <fullName>Protein translocase subunit SecF</fullName>
    </recommendedName>
</protein>
<feature type="chain" id="PRO_0000095979" description="Protein translocase subunit SecF">
    <location>
        <begin position="1"/>
        <end position="325"/>
    </location>
</feature>
<feature type="transmembrane region" description="Helical" evidence="1">
    <location>
        <begin position="36"/>
        <end position="56"/>
    </location>
</feature>
<feature type="transmembrane region" description="Helical" evidence="1">
    <location>
        <begin position="148"/>
        <end position="168"/>
    </location>
</feature>
<feature type="transmembrane region" description="Helical" evidence="1">
    <location>
        <begin position="175"/>
        <end position="197"/>
    </location>
</feature>
<feature type="transmembrane region" description="Helical" evidence="1">
    <location>
        <begin position="202"/>
        <end position="224"/>
    </location>
</feature>
<feature type="transmembrane region" description="Helical" evidence="1">
    <location>
        <begin position="254"/>
        <end position="274"/>
    </location>
</feature>
<feature type="transmembrane region" description="Helical" evidence="1">
    <location>
        <begin position="281"/>
        <end position="301"/>
    </location>
</feature>
<keyword id="KW-0997">Cell inner membrane</keyword>
<keyword id="KW-1003">Cell membrane</keyword>
<keyword id="KW-0472">Membrane</keyword>
<keyword id="KW-0653">Protein transport</keyword>
<keyword id="KW-1185">Reference proteome</keyword>
<keyword id="KW-0811">Translocation</keyword>
<keyword id="KW-0812">Transmembrane</keyword>
<keyword id="KW-1133">Transmembrane helix</keyword>
<keyword id="KW-0813">Transport</keyword>
<proteinExistence type="inferred from homology"/>
<accession>P44590</accession>
<reference key="1">
    <citation type="journal article" date="1995" name="Science">
        <title>Whole-genome random sequencing and assembly of Haemophilus influenzae Rd.</title>
        <authorList>
            <person name="Fleischmann R.D."/>
            <person name="Adams M.D."/>
            <person name="White O."/>
            <person name="Clayton R.A."/>
            <person name="Kirkness E.F."/>
            <person name="Kerlavage A.R."/>
            <person name="Bult C.J."/>
            <person name="Tomb J.-F."/>
            <person name="Dougherty B.A."/>
            <person name="Merrick J.M."/>
            <person name="McKenney K."/>
            <person name="Sutton G.G."/>
            <person name="FitzHugh W."/>
            <person name="Fields C.A."/>
            <person name="Gocayne J.D."/>
            <person name="Scott J.D."/>
            <person name="Shirley R."/>
            <person name="Liu L.-I."/>
            <person name="Glodek A."/>
            <person name="Kelley J.M."/>
            <person name="Weidman J.F."/>
            <person name="Phillips C.A."/>
            <person name="Spriggs T."/>
            <person name="Hedblom E."/>
            <person name="Cotton M.D."/>
            <person name="Utterback T.R."/>
            <person name="Hanna M.C."/>
            <person name="Nguyen D.T."/>
            <person name="Saudek D.M."/>
            <person name="Brandon R.C."/>
            <person name="Fine L.D."/>
            <person name="Fritchman J.L."/>
            <person name="Fuhrmann J.L."/>
            <person name="Geoghagen N.S.M."/>
            <person name="Gnehm C.L."/>
            <person name="McDonald L.A."/>
            <person name="Small K.V."/>
            <person name="Fraser C.M."/>
            <person name="Smith H.O."/>
            <person name="Venter J.C."/>
        </authorList>
    </citation>
    <scope>NUCLEOTIDE SEQUENCE [LARGE SCALE GENOMIC DNA]</scope>
    <source>
        <strain>ATCC 51907 / DSM 11121 / KW20 / Rd</strain>
    </source>
</reference>
<gene>
    <name evidence="1" type="primary">secF</name>
    <name type="ordered locus">HI_0239</name>
</gene>
<comment type="function">
    <text evidence="1">Part of the Sec protein translocase complex. Interacts with the SecYEG preprotein conducting channel. SecDF uses the proton motive force (PMF) to complete protein translocation after the ATP-dependent function of SecA.</text>
</comment>
<comment type="subunit">
    <text evidence="1">Forms a complex with SecD. Part of the essential Sec protein translocation apparatus which comprises SecA, SecYEG and auxiliary proteins SecDF-YajC and YidC.</text>
</comment>
<comment type="subcellular location">
    <subcellularLocation>
        <location evidence="1">Cell inner membrane</location>
        <topology evidence="1">Multi-pass membrane protein</topology>
    </subcellularLocation>
</comment>
<comment type="similarity">
    <text evidence="1">Belongs to the SecD/SecF family. SecF subfamily.</text>
</comment>
<organism>
    <name type="scientific">Haemophilus influenzae (strain ATCC 51907 / DSM 11121 / KW20 / Rd)</name>
    <dbReference type="NCBI Taxonomy" id="71421"/>
    <lineage>
        <taxon>Bacteria</taxon>
        <taxon>Pseudomonadati</taxon>
        <taxon>Pseudomonadota</taxon>
        <taxon>Gammaproteobacteria</taxon>
        <taxon>Pasteurellales</taxon>
        <taxon>Pasteurellaceae</taxon>
        <taxon>Haemophilus</taxon>
    </lineage>
</organism>
<name>SECF_HAEIN</name>